<evidence type="ECO:0000250" key="1"/>
<evidence type="ECO:0000250" key="2">
    <source>
        <dbReference type="UniProtKB" id="Q811P8"/>
    </source>
</evidence>
<evidence type="ECO:0000255" key="3">
    <source>
        <dbReference type="PROSITE-ProRule" id="PRU00172"/>
    </source>
</evidence>
<evidence type="ECO:0000255" key="4">
    <source>
        <dbReference type="PROSITE-ProRule" id="PRU00192"/>
    </source>
</evidence>
<evidence type="ECO:0000256" key="5">
    <source>
        <dbReference type="SAM" id="MobiDB-lite"/>
    </source>
</evidence>
<evidence type="ECO:0000269" key="6">
    <source>
    </source>
</evidence>
<evidence type="ECO:0000269" key="7">
    <source>
    </source>
</evidence>
<evidence type="ECO:0000269" key="8">
    <source>
    </source>
</evidence>
<evidence type="ECO:0000269" key="9">
    <source>
    </source>
</evidence>
<evidence type="ECO:0000269" key="10">
    <source>
    </source>
</evidence>
<evidence type="ECO:0000269" key="11">
    <source>
    </source>
</evidence>
<evidence type="ECO:0000269" key="12">
    <source>
    </source>
</evidence>
<evidence type="ECO:0000303" key="13">
    <source>
    </source>
</evidence>
<evidence type="ECO:0000303" key="14">
    <source>
    </source>
</evidence>
<evidence type="ECO:0000303" key="15">
    <source>
    </source>
</evidence>
<evidence type="ECO:0000303" key="16">
    <source>
    </source>
</evidence>
<evidence type="ECO:0000303" key="17">
    <source>
    </source>
</evidence>
<evidence type="ECO:0000305" key="18"/>
<evidence type="ECO:0007744" key="19">
    <source>
    </source>
</evidence>
<evidence type="ECO:0007744" key="20">
    <source>
    </source>
</evidence>
<evidence type="ECO:0007744" key="21">
    <source>
    </source>
</evidence>
<evidence type="ECO:0007744" key="22">
    <source>
    </source>
</evidence>
<evidence type="ECO:0007829" key="23">
    <source>
        <dbReference type="PDB" id="3IUG"/>
    </source>
</evidence>
<name>RHG32_HUMAN</name>
<feature type="chain" id="PRO_0000345203" description="Rho GTPase-activating protein 32">
    <location>
        <begin position="1"/>
        <end position="2087"/>
    </location>
</feature>
<feature type="domain" description="PX; atypical">
    <location>
        <begin position="131"/>
        <end position="245"/>
    </location>
</feature>
<feature type="domain" description="SH3" evidence="4">
    <location>
        <begin position="259"/>
        <end position="321"/>
    </location>
</feature>
<feature type="domain" description="Rho-GAP" evidence="3">
    <location>
        <begin position="372"/>
        <end position="567"/>
    </location>
</feature>
<feature type="region of interest" description="Disordered" evidence="5">
    <location>
        <begin position="818"/>
        <end position="858"/>
    </location>
</feature>
<feature type="region of interest" description="Disordered" evidence="5">
    <location>
        <begin position="927"/>
        <end position="1038"/>
    </location>
</feature>
<feature type="region of interest" description="Disordered" evidence="5">
    <location>
        <begin position="1103"/>
        <end position="1143"/>
    </location>
</feature>
<feature type="region of interest" description="Disordered" evidence="5">
    <location>
        <begin position="1169"/>
        <end position="1257"/>
    </location>
</feature>
<feature type="region of interest" description="Interaction with GAB2" evidence="10">
    <location>
        <begin position="1391"/>
        <end position="1711"/>
    </location>
</feature>
<feature type="region of interest" description="Interaction with FYN" evidence="9">
    <location>
        <begin position="1685"/>
        <end position="2087"/>
    </location>
</feature>
<feature type="region of interest" description="Disordered" evidence="5">
    <location>
        <begin position="1798"/>
        <end position="1896"/>
    </location>
</feature>
<feature type="compositionally biased region" description="Basic and acidic residues" evidence="5">
    <location>
        <begin position="825"/>
        <end position="837"/>
    </location>
</feature>
<feature type="compositionally biased region" description="Polar residues" evidence="5">
    <location>
        <begin position="838"/>
        <end position="854"/>
    </location>
</feature>
<feature type="compositionally biased region" description="Low complexity" evidence="5">
    <location>
        <begin position="927"/>
        <end position="938"/>
    </location>
</feature>
<feature type="compositionally biased region" description="Low complexity" evidence="5">
    <location>
        <begin position="994"/>
        <end position="1005"/>
    </location>
</feature>
<feature type="compositionally biased region" description="Low complexity" evidence="5">
    <location>
        <begin position="1019"/>
        <end position="1029"/>
    </location>
</feature>
<feature type="compositionally biased region" description="Polar residues" evidence="5">
    <location>
        <begin position="1124"/>
        <end position="1138"/>
    </location>
</feature>
<feature type="compositionally biased region" description="Basic and acidic residues" evidence="5">
    <location>
        <begin position="1172"/>
        <end position="1182"/>
    </location>
</feature>
<feature type="compositionally biased region" description="Polar residues" evidence="5">
    <location>
        <begin position="1188"/>
        <end position="1203"/>
    </location>
</feature>
<feature type="compositionally biased region" description="Basic and acidic residues" evidence="5">
    <location>
        <begin position="1222"/>
        <end position="1232"/>
    </location>
</feature>
<feature type="compositionally biased region" description="Basic and acidic residues" evidence="5">
    <location>
        <begin position="1823"/>
        <end position="1838"/>
    </location>
</feature>
<feature type="compositionally biased region" description="Polar residues" evidence="5">
    <location>
        <begin position="1847"/>
        <end position="1862"/>
    </location>
</feature>
<feature type="compositionally biased region" description="Basic and acidic residues" evidence="5">
    <location>
        <begin position="1875"/>
        <end position="1889"/>
    </location>
</feature>
<feature type="site" description="Arginine finger; crucial for GTP hydrolysis by stabilizing the transition state" evidence="3">
    <location>
        <position position="407"/>
    </location>
</feature>
<feature type="modified residue" description="Phosphoserine" evidence="20 21">
    <location>
        <position position="706"/>
    </location>
</feature>
<feature type="modified residue" description="Phosphoserine" evidence="2">
    <location>
        <position position="709"/>
    </location>
</feature>
<feature type="modified residue" description="Phosphoserine" evidence="2">
    <location>
        <position position="732"/>
    </location>
</feature>
<feature type="modified residue" description="Phosphoserine" evidence="2">
    <location>
        <position position="738"/>
    </location>
</feature>
<feature type="modified residue" description="Phosphoserine" evidence="2">
    <location>
        <position position="852"/>
    </location>
</feature>
<feature type="modified residue" description="Phosphoserine" evidence="2">
    <location>
        <position position="856"/>
    </location>
</feature>
<feature type="modified residue" description="Phosphoserine" evidence="21">
    <location>
        <position position="892"/>
    </location>
</feature>
<feature type="modified residue" description="Phosphoserine" evidence="22">
    <location>
        <position position="952"/>
    </location>
</feature>
<feature type="modified residue" description="Phosphoserine" evidence="19">
    <location>
        <position position="1203"/>
    </location>
</feature>
<feature type="modified residue" description="Asymmetric dimethylarginine" evidence="2">
    <location>
        <position position="1523"/>
    </location>
</feature>
<feature type="modified residue" description="Asymmetric dimethylarginine" evidence="2">
    <location>
        <position position="1533"/>
    </location>
</feature>
<feature type="modified residue" description="Phosphoserine" evidence="2">
    <location>
        <position position="1585"/>
    </location>
</feature>
<feature type="modified residue" description="Omega-N-methylarginine" evidence="2">
    <location>
        <position position="2037"/>
    </location>
</feature>
<feature type="splice variant" id="VSP_034933" description="In isoform 2." evidence="13 14 15 16 17">
    <location>
        <begin position="1"/>
        <end position="349"/>
    </location>
</feature>
<feature type="splice variant" id="VSP_034934" description="In isoform 3." evidence="16">
    <location>
        <begin position="1"/>
        <end position="290"/>
    </location>
</feature>
<feature type="splice variant" id="VSP_034935" description="In isoform 3." evidence="16">
    <original>FSGRISMAMQEGAASLSRPKSLLVSSPSTKLLTLEEAQARTQAQVN</original>
    <variation>LPHFSARTELIVPFPLRLLRKQFTPPLLGPMSPLNPLVQITVCISI</variation>
    <location>
        <begin position="567"/>
        <end position="612"/>
    </location>
</feature>
<feature type="splice variant" id="VSP_034936" description="In isoform 3." evidence="16">
    <location>
        <begin position="613"/>
        <end position="2087"/>
    </location>
</feature>
<feature type="mutagenesis site" description="Loss of binding to phospholipids. Cytoplasmic localization." evidence="12">
    <original>Y</original>
    <variation>A</variation>
    <location>
        <position position="173"/>
    </location>
</feature>
<feature type="mutagenesis site" description="Mild effect on GAP activity and neurite-promotion upon nerve growth factor stimulation." evidence="6 7 8 11 12">
    <original>R</original>
    <variation>A</variation>
    <location>
        <position position="407"/>
    </location>
</feature>
<feature type="mutagenesis site" description="Loss of GAP activity." evidence="6 7 8 11 12">
    <original>R</original>
    <variation>I</variation>
    <location>
        <position position="407"/>
    </location>
</feature>
<feature type="mutagenesis site" description="Loss of GAP activity. In isoform 1, no inhibitory effect on neurite extension." evidence="6 7 8 11 12">
    <original>R</original>
    <variation>M</variation>
    <location>
        <position position="407"/>
    </location>
</feature>
<feature type="mutagenesis site" description="Loss of GAP activity." evidence="8">
    <original>K</original>
    <variation>A</variation>
    <location>
        <position position="447"/>
    </location>
</feature>
<feature type="helix" evidence="23">
    <location>
        <begin position="374"/>
        <end position="381"/>
    </location>
</feature>
<feature type="helix" evidence="23">
    <location>
        <begin position="387"/>
        <end position="399"/>
    </location>
</feature>
<feature type="turn" evidence="23">
    <location>
        <begin position="403"/>
        <end position="407"/>
    </location>
</feature>
<feature type="helix" evidence="23">
    <location>
        <begin position="412"/>
        <end position="423"/>
    </location>
</feature>
<feature type="turn" evidence="23">
    <location>
        <begin position="433"/>
        <end position="437"/>
    </location>
</feature>
<feature type="helix" evidence="23">
    <location>
        <begin position="439"/>
        <end position="452"/>
    </location>
</feature>
<feature type="turn" evidence="23">
    <location>
        <begin position="460"/>
        <end position="462"/>
    </location>
</feature>
<feature type="helix" evidence="23">
    <location>
        <begin position="463"/>
        <end position="470"/>
    </location>
</feature>
<feature type="strand" evidence="23">
    <location>
        <begin position="472"/>
        <end position="474"/>
    </location>
</feature>
<feature type="helix" evidence="23">
    <location>
        <begin position="475"/>
        <end position="486"/>
    </location>
</feature>
<feature type="helix" evidence="23">
    <location>
        <begin position="491"/>
        <end position="508"/>
    </location>
</feature>
<feature type="helix" evidence="23">
    <location>
        <begin position="511"/>
        <end position="514"/>
    </location>
</feature>
<feature type="helix" evidence="23">
    <location>
        <begin position="518"/>
        <end position="529"/>
    </location>
</feature>
<feature type="helix" evidence="23">
    <location>
        <begin position="553"/>
        <end position="561"/>
    </location>
</feature>
<feature type="helix" evidence="23">
    <location>
        <begin position="563"/>
        <end position="566"/>
    </location>
</feature>
<accession>A7KAX9</accession>
<accession>I7H0B0</accession>
<accession>O94820</accession>
<accession>Q86YL6</accession>
<accession>Q8IUG4</accession>
<accession>Q9BWG3</accession>
<organism>
    <name type="scientific">Homo sapiens</name>
    <name type="common">Human</name>
    <dbReference type="NCBI Taxonomy" id="9606"/>
    <lineage>
        <taxon>Eukaryota</taxon>
        <taxon>Metazoa</taxon>
        <taxon>Chordata</taxon>
        <taxon>Craniata</taxon>
        <taxon>Vertebrata</taxon>
        <taxon>Euteleostomi</taxon>
        <taxon>Mammalia</taxon>
        <taxon>Eutheria</taxon>
        <taxon>Euarchontoglires</taxon>
        <taxon>Primates</taxon>
        <taxon>Haplorrhini</taxon>
        <taxon>Catarrhini</taxon>
        <taxon>Hominidae</taxon>
        <taxon>Homo</taxon>
    </lineage>
</organism>
<dbReference type="EMBL" id="AB079856">
    <property type="protein sequence ID" value="BAC24802.1"/>
    <property type="molecule type" value="mRNA"/>
</dbReference>
<dbReference type="EMBL" id="AY194287">
    <property type="protein sequence ID" value="AAO43677.1"/>
    <property type="molecule type" value="mRNA"/>
</dbReference>
<dbReference type="EMBL" id="AB088416">
    <property type="protein sequence ID" value="BAM34446.1"/>
    <property type="molecule type" value="mRNA"/>
</dbReference>
<dbReference type="EMBL" id="EF127492">
    <property type="protein sequence ID" value="ABO33171.1"/>
    <property type="molecule type" value="mRNA"/>
</dbReference>
<dbReference type="EMBL" id="AB018255">
    <property type="protein sequence ID" value="BAA34432.2"/>
    <property type="status" value="ALT_INIT"/>
    <property type="molecule type" value="mRNA"/>
</dbReference>
<dbReference type="EMBL" id="CH471065">
    <property type="protein sequence ID" value="EAW67740.1"/>
    <property type="molecule type" value="Genomic_DNA"/>
</dbReference>
<dbReference type="EMBL" id="BC000277">
    <property type="protein sequence ID" value="AAH00277.2"/>
    <property type="molecule type" value="mRNA"/>
</dbReference>
<dbReference type="EMBL" id="BC104898">
    <property type="protein sequence ID" value="AAI04899.1"/>
    <property type="molecule type" value="mRNA"/>
</dbReference>
<dbReference type="EMBL" id="BC113429">
    <property type="protein sequence ID" value="AAI13430.1"/>
    <property type="molecule type" value="mRNA"/>
</dbReference>
<dbReference type="CCDS" id="CCDS31718.1">
    <molecule id="A7KAX9-2"/>
</dbReference>
<dbReference type="CCDS" id="CCDS44769.1">
    <molecule id="A7KAX9-1"/>
</dbReference>
<dbReference type="RefSeq" id="NP_001136157.1">
    <molecule id="A7KAX9-1"/>
    <property type="nucleotide sequence ID" value="NM_001142685.2"/>
</dbReference>
<dbReference type="RefSeq" id="NP_055530.2">
    <molecule id="A7KAX9-2"/>
    <property type="nucleotide sequence ID" value="NM_014715.3"/>
</dbReference>
<dbReference type="PDB" id="3IUG">
    <property type="method" value="X-ray"/>
    <property type="resolution" value="1.77 A"/>
    <property type="chains" value="A/B=367-577"/>
</dbReference>
<dbReference type="PDBsum" id="3IUG"/>
<dbReference type="SMR" id="A7KAX9"/>
<dbReference type="BioGRID" id="115091">
    <property type="interactions" value="155"/>
</dbReference>
<dbReference type="FunCoup" id="A7KAX9">
    <property type="interactions" value="1088"/>
</dbReference>
<dbReference type="IntAct" id="A7KAX9">
    <property type="interactions" value="66"/>
</dbReference>
<dbReference type="MINT" id="A7KAX9"/>
<dbReference type="STRING" id="9606.ENSP00000310561"/>
<dbReference type="GlyGen" id="A7KAX9">
    <property type="glycosylation" value="2 sites, 1 O-linked glycan (1 site)"/>
</dbReference>
<dbReference type="iPTMnet" id="A7KAX9"/>
<dbReference type="PhosphoSitePlus" id="A7KAX9"/>
<dbReference type="SwissPalm" id="A7KAX9"/>
<dbReference type="BioMuta" id="ARHGAP32"/>
<dbReference type="CPTAC" id="CPTAC-1032"/>
<dbReference type="jPOST" id="A7KAX9"/>
<dbReference type="MassIVE" id="A7KAX9"/>
<dbReference type="PaxDb" id="9606-ENSP00000310561"/>
<dbReference type="PeptideAtlas" id="A7KAX9"/>
<dbReference type="ProteomicsDB" id="1805">
    <molecule id="A7KAX9-1"/>
</dbReference>
<dbReference type="ProteomicsDB" id="1806">
    <molecule id="A7KAX9-2"/>
</dbReference>
<dbReference type="ProteomicsDB" id="1807">
    <molecule id="A7KAX9-3"/>
</dbReference>
<dbReference type="Pumba" id="A7KAX9"/>
<dbReference type="Antibodypedia" id="51352">
    <property type="antibodies" value="86 antibodies from 14 providers"/>
</dbReference>
<dbReference type="DNASU" id="9743"/>
<dbReference type="Ensembl" id="ENST00000310343.13">
    <molecule id="A7KAX9-1"/>
    <property type="protein sequence ID" value="ENSP00000310561.8"/>
    <property type="gene ID" value="ENSG00000134909.19"/>
</dbReference>
<dbReference type="Ensembl" id="ENST00000392657.7">
    <molecule id="A7KAX9-2"/>
    <property type="protein sequence ID" value="ENSP00000376425.3"/>
    <property type="gene ID" value="ENSG00000134909.19"/>
</dbReference>
<dbReference type="Ensembl" id="ENST00000527272.1">
    <molecule id="A7KAX9-2"/>
    <property type="protein sequence ID" value="ENSP00000432862.1"/>
    <property type="gene ID" value="ENSG00000134909.19"/>
</dbReference>
<dbReference type="GeneID" id="9743"/>
<dbReference type="KEGG" id="hsa:9743"/>
<dbReference type="UCSC" id="uc001qez.4">
    <molecule id="A7KAX9-1"/>
    <property type="organism name" value="human"/>
</dbReference>
<dbReference type="AGR" id="HGNC:17399"/>
<dbReference type="CTD" id="9743"/>
<dbReference type="DisGeNET" id="9743"/>
<dbReference type="GeneCards" id="ARHGAP32"/>
<dbReference type="HGNC" id="HGNC:17399">
    <property type="gene designation" value="ARHGAP32"/>
</dbReference>
<dbReference type="HPA" id="ENSG00000134909">
    <property type="expression patterns" value="Low tissue specificity"/>
</dbReference>
<dbReference type="MIM" id="608541">
    <property type="type" value="gene"/>
</dbReference>
<dbReference type="neXtProt" id="NX_A7KAX9"/>
<dbReference type="OpenTargets" id="ENSG00000134909"/>
<dbReference type="PharmGKB" id="PA165543138"/>
<dbReference type="VEuPathDB" id="HostDB:ENSG00000134909"/>
<dbReference type="eggNOG" id="KOG1449">
    <property type="taxonomic scope" value="Eukaryota"/>
</dbReference>
<dbReference type="eggNOG" id="KOG3564">
    <property type="taxonomic scope" value="Eukaryota"/>
</dbReference>
<dbReference type="GeneTree" id="ENSGT00940000154313"/>
<dbReference type="HOGENOM" id="CLU_002754_0_0_1"/>
<dbReference type="InParanoid" id="A7KAX9"/>
<dbReference type="OMA" id="IIQVTDC"/>
<dbReference type="OrthoDB" id="79452at2759"/>
<dbReference type="PAN-GO" id="A7KAX9">
    <property type="GO annotations" value="7 GO annotations based on evolutionary models"/>
</dbReference>
<dbReference type="PhylomeDB" id="A7KAX9"/>
<dbReference type="TreeFam" id="TF351451"/>
<dbReference type="PathwayCommons" id="A7KAX9"/>
<dbReference type="Reactome" id="R-HSA-8980692">
    <property type="pathway name" value="RHOA GTPase cycle"/>
</dbReference>
<dbReference type="Reactome" id="R-HSA-9013026">
    <property type="pathway name" value="RHOB GTPase cycle"/>
</dbReference>
<dbReference type="Reactome" id="R-HSA-9013106">
    <property type="pathway name" value="RHOC GTPase cycle"/>
</dbReference>
<dbReference type="Reactome" id="R-HSA-9013148">
    <property type="pathway name" value="CDC42 GTPase cycle"/>
</dbReference>
<dbReference type="Reactome" id="R-HSA-9013149">
    <property type="pathway name" value="RAC1 GTPase cycle"/>
</dbReference>
<dbReference type="Reactome" id="R-HSA-9013404">
    <property type="pathway name" value="RAC2 GTPase cycle"/>
</dbReference>
<dbReference type="Reactome" id="R-HSA-9013405">
    <property type="pathway name" value="RHOD GTPase cycle"/>
</dbReference>
<dbReference type="Reactome" id="R-HSA-9013406">
    <property type="pathway name" value="RHOQ GTPase cycle"/>
</dbReference>
<dbReference type="Reactome" id="R-HSA-9013408">
    <property type="pathway name" value="RHOG GTPase cycle"/>
</dbReference>
<dbReference type="Reactome" id="R-HSA-9013409">
    <property type="pathway name" value="RHOJ GTPase cycle"/>
</dbReference>
<dbReference type="Reactome" id="R-HSA-9013423">
    <property type="pathway name" value="RAC3 GTPase cycle"/>
</dbReference>
<dbReference type="Reactome" id="R-HSA-9035034">
    <property type="pathway name" value="RHOF GTPase cycle"/>
</dbReference>
<dbReference type="SignaLink" id="A7KAX9"/>
<dbReference type="SIGNOR" id="A7KAX9"/>
<dbReference type="BioGRID-ORCS" id="9743">
    <property type="hits" value="15 hits in 1150 CRISPR screens"/>
</dbReference>
<dbReference type="ChiTaRS" id="ARHGAP32">
    <property type="organism name" value="human"/>
</dbReference>
<dbReference type="EvolutionaryTrace" id="A7KAX9"/>
<dbReference type="GeneWiki" id="RICS_(gene)"/>
<dbReference type="GenomeRNAi" id="9743"/>
<dbReference type="Pharos" id="A7KAX9">
    <property type="development level" value="Tbio"/>
</dbReference>
<dbReference type="PRO" id="PR:A7KAX9"/>
<dbReference type="Proteomes" id="UP000005640">
    <property type="component" value="Chromosome 11"/>
</dbReference>
<dbReference type="RNAct" id="A7KAX9">
    <property type="molecule type" value="protein"/>
</dbReference>
<dbReference type="Bgee" id="ENSG00000134909">
    <property type="expression patterns" value="Expressed in middle temporal gyrus and 182 other cell types or tissues"/>
</dbReference>
<dbReference type="ExpressionAtlas" id="A7KAX9">
    <property type="expression patterns" value="baseline and differential"/>
</dbReference>
<dbReference type="GO" id="GO:0015629">
    <property type="term" value="C:actin cytoskeleton"/>
    <property type="evidence" value="ECO:0000318"/>
    <property type="project" value="GO_Central"/>
</dbReference>
<dbReference type="GO" id="GO:0005938">
    <property type="term" value="C:cell cortex"/>
    <property type="evidence" value="ECO:0000318"/>
    <property type="project" value="GO_Central"/>
</dbReference>
<dbReference type="GO" id="GO:0005829">
    <property type="term" value="C:cytosol"/>
    <property type="evidence" value="ECO:0000304"/>
    <property type="project" value="Reactome"/>
</dbReference>
<dbReference type="GO" id="GO:0043197">
    <property type="term" value="C:dendritic spine"/>
    <property type="evidence" value="ECO:0007669"/>
    <property type="project" value="UniProtKB-SubCell"/>
</dbReference>
<dbReference type="GO" id="GO:0005789">
    <property type="term" value="C:endoplasmic reticulum membrane"/>
    <property type="evidence" value="ECO:0007669"/>
    <property type="project" value="UniProtKB-SubCell"/>
</dbReference>
<dbReference type="GO" id="GO:0010008">
    <property type="term" value="C:endosome membrane"/>
    <property type="evidence" value="ECO:0007669"/>
    <property type="project" value="UniProtKB-SubCell"/>
</dbReference>
<dbReference type="GO" id="GO:0001650">
    <property type="term" value="C:fibrillar center"/>
    <property type="evidence" value="ECO:0000314"/>
    <property type="project" value="HPA"/>
</dbReference>
<dbReference type="GO" id="GO:0005794">
    <property type="term" value="C:Golgi apparatus"/>
    <property type="evidence" value="ECO:0000314"/>
    <property type="project" value="HPA"/>
</dbReference>
<dbReference type="GO" id="GO:0000139">
    <property type="term" value="C:Golgi membrane"/>
    <property type="evidence" value="ECO:0007669"/>
    <property type="project" value="UniProtKB-SubCell"/>
</dbReference>
<dbReference type="GO" id="GO:0005654">
    <property type="term" value="C:nucleoplasm"/>
    <property type="evidence" value="ECO:0000314"/>
    <property type="project" value="HPA"/>
</dbReference>
<dbReference type="GO" id="GO:0014069">
    <property type="term" value="C:postsynaptic density"/>
    <property type="evidence" value="ECO:0000250"/>
    <property type="project" value="UniProtKB"/>
</dbReference>
<dbReference type="GO" id="GO:0005096">
    <property type="term" value="F:GTPase activator activity"/>
    <property type="evidence" value="ECO:0000318"/>
    <property type="project" value="GO_Central"/>
</dbReference>
<dbReference type="GO" id="GO:1901981">
    <property type="term" value="F:phosphatidylinositol phosphate binding"/>
    <property type="evidence" value="ECO:0007669"/>
    <property type="project" value="InterPro"/>
</dbReference>
<dbReference type="GO" id="GO:0051056">
    <property type="term" value="P:regulation of small GTPase mediated signal transduction"/>
    <property type="evidence" value="ECO:0000304"/>
    <property type="project" value="Reactome"/>
</dbReference>
<dbReference type="GO" id="GO:0007264">
    <property type="term" value="P:small GTPase-mediated signal transduction"/>
    <property type="evidence" value="ECO:0000318"/>
    <property type="project" value="GO_Central"/>
</dbReference>
<dbReference type="CDD" id="cd07298">
    <property type="entry name" value="PX_RICS"/>
    <property type="match status" value="1"/>
</dbReference>
<dbReference type="CDD" id="cd04384">
    <property type="entry name" value="RhoGAP_CdGAP"/>
    <property type="match status" value="1"/>
</dbReference>
<dbReference type="CDD" id="cd11835">
    <property type="entry name" value="SH3_ARHGAP32_33"/>
    <property type="match status" value="1"/>
</dbReference>
<dbReference type="FunFam" id="1.10.555.10:FF:000002">
    <property type="entry name" value="rho GTPase-activating protein 32 isoform X1"/>
    <property type="match status" value="1"/>
</dbReference>
<dbReference type="FunFam" id="3.30.1520.10:FF:000009">
    <property type="entry name" value="rho GTPase-activating protein 32 isoform X2"/>
    <property type="match status" value="1"/>
</dbReference>
<dbReference type="Gene3D" id="3.30.1520.10">
    <property type="entry name" value="Phox-like domain"/>
    <property type="match status" value="1"/>
</dbReference>
<dbReference type="Gene3D" id="1.10.555.10">
    <property type="entry name" value="Rho GTPase activation protein"/>
    <property type="match status" value="1"/>
</dbReference>
<dbReference type="Gene3D" id="2.30.30.40">
    <property type="entry name" value="SH3 Domains"/>
    <property type="match status" value="1"/>
</dbReference>
<dbReference type="InterPro" id="IPR051576">
    <property type="entry name" value="PX-Rho_GAP"/>
</dbReference>
<dbReference type="InterPro" id="IPR042139">
    <property type="entry name" value="PX_ARHGAP32"/>
</dbReference>
<dbReference type="InterPro" id="IPR036871">
    <property type="entry name" value="PX_dom_sf"/>
</dbReference>
<dbReference type="InterPro" id="IPR008936">
    <property type="entry name" value="Rho_GTPase_activation_prot"/>
</dbReference>
<dbReference type="InterPro" id="IPR000198">
    <property type="entry name" value="RhoGAP_dom"/>
</dbReference>
<dbReference type="InterPro" id="IPR036028">
    <property type="entry name" value="SH3-like_dom_sf"/>
</dbReference>
<dbReference type="InterPro" id="IPR001452">
    <property type="entry name" value="SH3_domain"/>
</dbReference>
<dbReference type="PANTHER" id="PTHR15729">
    <property type="entry name" value="CDC42 GTPASE-ACTIVATING PROTEIN"/>
    <property type="match status" value="1"/>
</dbReference>
<dbReference type="PANTHER" id="PTHR15729:SF13">
    <property type="entry name" value="RHO GTPASE-ACTIVATING PROTEIN 32"/>
    <property type="match status" value="1"/>
</dbReference>
<dbReference type="Pfam" id="PF00620">
    <property type="entry name" value="RhoGAP"/>
    <property type="match status" value="1"/>
</dbReference>
<dbReference type="Pfam" id="PF14604">
    <property type="entry name" value="SH3_9"/>
    <property type="match status" value="1"/>
</dbReference>
<dbReference type="SMART" id="SM00324">
    <property type="entry name" value="RhoGAP"/>
    <property type="match status" value="1"/>
</dbReference>
<dbReference type="SMART" id="SM00326">
    <property type="entry name" value="SH3"/>
    <property type="match status" value="1"/>
</dbReference>
<dbReference type="SUPFAM" id="SSF48350">
    <property type="entry name" value="GTPase activation domain, GAP"/>
    <property type="match status" value="1"/>
</dbReference>
<dbReference type="SUPFAM" id="SSF64268">
    <property type="entry name" value="PX domain"/>
    <property type="match status" value="1"/>
</dbReference>
<dbReference type="SUPFAM" id="SSF50044">
    <property type="entry name" value="SH3-domain"/>
    <property type="match status" value="1"/>
</dbReference>
<dbReference type="PROSITE" id="PS50238">
    <property type="entry name" value="RHOGAP"/>
    <property type="match status" value="1"/>
</dbReference>
<dbReference type="PROSITE" id="PS50002">
    <property type="entry name" value="SH3"/>
    <property type="match status" value="1"/>
</dbReference>
<reference key="1">
    <citation type="journal article" date="2002" name="Mol. Cell. Biol.">
        <title>Grit, a GTPase-activating protein for the Rho family, regulates neurite extension through association with the TrkA receptor and N-Shc and CrkL/Crk adapter molecules.</title>
        <authorList>
            <person name="Nakamura T."/>
            <person name="Komiya M."/>
            <person name="Sone K."/>
            <person name="Hirose E."/>
            <person name="Gotoh N."/>
            <person name="Morii H."/>
            <person name="Ohta Y."/>
            <person name="Mori N."/>
        </authorList>
    </citation>
    <scope>NUCLEOTIDE SEQUENCE [MRNA] (ISOFORM 2)</scope>
    <scope>FUNCTION</scope>
    <scope>INTERACTION WITH NTRK1; SHC3; BCAR1; EGFR; CRK AND CRKL</scope>
    <scope>SUBCELLULAR LOCATION</scope>
    <scope>TISSUE SPECIFICITY</scope>
    <scope>PHOSPHORYLATION</scope>
    <scope>MUTAGENESIS OF ARG-407</scope>
    <source>
        <tissue>Brain</tissue>
    </source>
</reference>
<reference key="2">
    <citation type="journal article" date="2003" name="J. Biol. Chem.">
        <title>RICS, a novel GTPase-activating protein for Cdc42 and Rac1, is involved in the beta-catenin-N-cadherin and N-methyl-D-aspartate receptor signaling.</title>
        <authorList>
            <person name="Okabe T."/>
            <person name="Nakamura T."/>
            <person name="Nishimura Y.N."/>
            <person name="Kohu K."/>
            <person name="Ohwada S."/>
            <person name="Morishita Y."/>
            <person name="Akiyama T."/>
        </authorList>
    </citation>
    <scope>NUCLEOTIDE SEQUENCE [MRNA] (ISOFORM 2)</scope>
    <scope>FUNCTION</scope>
    <scope>INTERACTION WITH CTNNB1</scope>
    <scope>MUTAGENESIS OF ARG-407 AND LYS-447</scope>
</reference>
<reference key="3">
    <citation type="journal article" date="2003" name="J. Biol. Chem.">
        <title>GC-GAP, a Rho family GTPase-activating protein that interacts with signaling adapters Gab1 and Gab2.</title>
        <authorList>
            <person name="Zhao C."/>
            <person name="Ma H."/>
            <person name="Bossy-Wetzel E."/>
            <person name="Lipton S.A."/>
            <person name="Zhang Z."/>
            <person name="Feng G.S."/>
        </authorList>
    </citation>
    <scope>NUCLEOTIDE SEQUENCE [MRNA] (ISOFORM 2)</scope>
    <scope>FUNCTION</scope>
    <scope>INTERACTION WITH GAB1 AND GAB2; BCAR1; CRK AND NCK1</scope>
    <scope>SUBCELLULAR LOCATION</scope>
    <source>
        <tissue>Brain</tissue>
    </source>
</reference>
<reference key="4">
    <citation type="journal article" date="2007" name="Genes Cells">
        <title>PX-RICS, a novel splicing variant of RICS, is a main isoform expressed during neural development.</title>
        <authorList>
            <person name="Hayashi T."/>
            <person name="Okabe T."/>
            <person name="Nasu-Nishimura Y."/>
            <person name="Sakaue F."/>
            <person name="Ohwada S."/>
            <person name="Matsuura K."/>
            <person name="Akiyama T."/>
            <person name="Nakamura T."/>
        </authorList>
    </citation>
    <scope>NUCLEOTIDE SEQUENCE [MRNA] (ISOFORM 1)</scope>
    <scope>ALTERNATIVE SPLICING</scope>
    <scope>FUNCTION</scope>
    <scope>SUBCELLULAR LOCATION</scope>
    <scope>MUTAGENESIS OF TYR-173 AND ARG-407</scope>
</reference>
<reference key="5">
    <citation type="journal article" date="1998" name="DNA Res.">
        <title>Prediction of the coding sequences of unidentified human genes. XI. The complete sequences of 100 new cDNA clones from brain which code for large proteins in vitro.</title>
        <authorList>
            <person name="Nagase T."/>
            <person name="Ishikawa K."/>
            <person name="Suyama M."/>
            <person name="Kikuno R."/>
            <person name="Miyajima N."/>
            <person name="Tanaka A."/>
            <person name="Kotani H."/>
            <person name="Nomura N."/>
            <person name="Ohara O."/>
        </authorList>
    </citation>
    <scope>NUCLEOTIDE SEQUENCE [LARGE SCALE MRNA] (ISOFORM 2)</scope>
    <source>
        <tissue>Brain</tissue>
    </source>
</reference>
<reference key="6">
    <citation type="submission" date="2005-07" db="EMBL/GenBank/DDBJ databases">
        <authorList>
            <person name="Mural R.J."/>
            <person name="Istrail S."/>
            <person name="Sutton G.G."/>
            <person name="Florea L."/>
            <person name="Halpern A.L."/>
            <person name="Mobarry C.M."/>
            <person name="Lippert R."/>
            <person name="Walenz B."/>
            <person name="Shatkay H."/>
            <person name="Dew I."/>
            <person name="Miller J.R."/>
            <person name="Flanigan M.J."/>
            <person name="Edwards N.J."/>
            <person name="Bolanos R."/>
            <person name="Fasulo D."/>
            <person name="Halldorsson B.V."/>
            <person name="Hannenhalli S."/>
            <person name="Turner R."/>
            <person name="Yooseph S."/>
            <person name="Lu F."/>
            <person name="Nusskern D.R."/>
            <person name="Shue B.C."/>
            <person name="Zheng X.H."/>
            <person name="Zhong F."/>
            <person name="Delcher A.L."/>
            <person name="Huson D.H."/>
            <person name="Kravitz S.A."/>
            <person name="Mouchard L."/>
            <person name="Reinert K."/>
            <person name="Remington K.A."/>
            <person name="Clark A.G."/>
            <person name="Waterman M.S."/>
            <person name="Eichler E.E."/>
            <person name="Adams M.D."/>
            <person name="Hunkapiller M.W."/>
            <person name="Myers E.W."/>
            <person name="Venter J.C."/>
        </authorList>
    </citation>
    <scope>NUCLEOTIDE SEQUENCE [LARGE SCALE GENOMIC DNA]</scope>
</reference>
<reference key="7">
    <citation type="journal article" date="2004" name="Genome Res.">
        <title>The status, quality, and expansion of the NIH full-length cDNA project: the Mammalian Gene Collection (MGC).</title>
        <authorList>
            <consortium name="The MGC Project Team"/>
        </authorList>
    </citation>
    <scope>NUCLEOTIDE SEQUENCE [LARGE SCALE MRNA] (ISOFORMS 2 AND 3)</scope>
    <source>
        <tissue>Colon</tissue>
        <tissue>Eye</tissue>
    </source>
</reference>
<reference key="8">
    <citation type="journal article" date="2003" name="Biochem. Biophys. Res. Commun.">
        <title>p250GAP, a neural RhoGAP protein, is associated with and phosphorylated by Fyn.</title>
        <authorList>
            <person name="Taniguchi S."/>
            <person name="Liu H."/>
            <person name="Nakazawa T."/>
            <person name="Yokoyama K."/>
            <person name="Tezuka T."/>
            <person name="Yamamoto T."/>
        </authorList>
    </citation>
    <scope>FUNCTION</scope>
    <scope>INTERACTION WITH FYN</scope>
    <scope>PHOSPHORYLATION (ISOFORM 2)</scope>
</reference>
<reference key="9">
    <citation type="journal article" date="2003" name="J. Biol. Chem.">
        <title>Characterization of a brain-specific Rho GTPase-activating protein, p200RhoGAP.</title>
        <authorList>
            <person name="Moon S.Y."/>
            <person name="Zang H."/>
            <person name="Zheng Y."/>
        </authorList>
    </citation>
    <scope>FUNCTION</scope>
    <scope>MUTAGENESIS OF ARG-407</scope>
</reference>
<reference key="10">
    <citation type="journal article" date="2003" name="Mol. Biol. Cell">
        <title>p250GAP, a novel brain-enriched GTPase-activating protein for Rho family GTPases, is involved in the N-methyl-d-aspartate receptor signaling.</title>
        <authorList>
            <person name="Nakazawa T."/>
            <person name="Watabe A.M."/>
            <person name="Tezuka T."/>
            <person name="Yoshida Y."/>
            <person name="Yokoyama K."/>
            <person name="Umemori H."/>
            <person name="Inoue A."/>
            <person name="Okabe S."/>
            <person name="Manabe T."/>
            <person name="Yamamoto T."/>
        </authorList>
    </citation>
    <scope>FUNCTION</scope>
    <scope>INTERACTION WITH GRIN2B</scope>
    <scope>MUTAGENESIS OF ARG-407</scope>
</reference>
<reference key="11">
    <citation type="journal article" date="2009" name="Anal. Chem.">
        <title>Lys-N and trypsin cover complementary parts of the phosphoproteome in a refined SCX-based approach.</title>
        <authorList>
            <person name="Gauci S."/>
            <person name="Helbig A.O."/>
            <person name="Slijper M."/>
            <person name="Krijgsveld J."/>
            <person name="Heck A.J."/>
            <person name="Mohammed S."/>
        </authorList>
    </citation>
    <scope>IDENTIFICATION BY MASS SPECTROMETRY [LARGE SCALE ANALYSIS]</scope>
</reference>
<reference key="12">
    <citation type="journal article" date="2009" name="Sci. Signal.">
        <title>Quantitative phosphoproteomic analysis of T cell receptor signaling reveals system-wide modulation of protein-protein interactions.</title>
        <authorList>
            <person name="Mayya V."/>
            <person name="Lundgren D.H."/>
            <person name="Hwang S.-I."/>
            <person name="Rezaul K."/>
            <person name="Wu L."/>
            <person name="Eng J.K."/>
            <person name="Rodionov V."/>
            <person name="Han D.K."/>
        </authorList>
    </citation>
    <scope>PHOSPHORYLATION [LARGE SCALE ANALYSIS] AT SER-1203</scope>
    <scope>IDENTIFICATION BY MASS SPECTROMETRY [LARGE SCALE ANALYSIS]</scope>
    <source>
        <tissue>Leukemic T-cell</tissue>
    </source>
</reference>
<reference key="13">
    <citation type="journal article" date="2011" name="Sci. Signal.">
        <title>System-wide temporal characterization of the proteome and phosphoproteome of human embryonic stem cell differentiation.</title>
        <authorList>
            <person name="Rigbolt K.T."/>
            <person name="Prokhorova T.A."/>
            <person name="Akimov V."/>
            <person name="Henningsen J."/>
            <person name="Johansen P.T."/>
            <person name="Kratchmarova I."/>
            <person name="Kassem M."/>
            <person name="Mann M."/>
            <person name="Olsen J.V."/>
            <person name="Blagoev B."/>
        </authorList>
    </citation>
    <scope>PHOSPHORYLATION [LARGE SCALE ANALYSIS] AT SER-706</scope>
    <scope>IDENTIFICATION BY MASS SPECTROMETRY [LARGE SCALE ANALYSIS]</scope>
</reference>
<reference key="14">
    <citation type="journal article" date="2013" name="J. Proteome Res.">
        <title>Toward a comprehensive characterization of a human cancer cell phosphoproteome.</title>
        <authorList>
            <person name="Zhou H."/>
            <person name="Di Palma S."/>
            <person name="Preisinger C."/>
            <person name="Peng M."/>
            <person name="Polat A.N."/>
            <person name="Heck A.J."/>
            <person name="Mohammed S."/>
        </authorList>
    </citation>
    <scope>PHOSPHORYLATION [LARGE SCALE ANALYSIS] AT SER-706 AND SER-892</scope>
    <scope>IDENTIFICATION BY MASS SPECTROMETRY [LARGE SCALE ANALYSIS]</scope>
    <source>
        <tissue>Cervix carcinoma</tissue>
    </source>
</reference>
<reference key="15">
    <citation type="journal article" date="2014" name="J. Proteomics">
        <title>An enzyme assisted RP-RPLC approach for in-depth analysis of human liver phosphoproteome.</title>
        <authorList>
            <person name="Bian Y."/>
            <person name="Song C."/>
            <person name="Cheng K."/>
            <person name="Dong M."/>
            <person name="Wang F."/>
            <person name="Huang J."/>
            <person name="Sun D."/>
            <person name="Wang L."/>
            <person name="Ye M."/>
            <person name="Zou H."/>
        </authorList>
    </citation>
    <scope>PHOSPHORYLATION [LARGE SCALE ANALYSIS] AT SER-952</scope>
    <scope>IDENTIFICATION BY MASS SPECTROMETRY [LARGE SCALE ANALYSIS]</scope>
    <source>
        <tissue>Liver</tissue>
    </source>
</reference>
<reference key="16">
    <citation type="submission" date="2009-09" db="PDB data bank">
        <title>Crystal structure of the Rho-GAP domain of RICS.</title>
        <authorList>
            <consortium name="Structural genomics consortium (SGC)"/>
        </authorList>
    </citation>
    <scope>X-RAY CRYSTALLOGRAPHY (1.77 ANGSTROMS) OF 367-577</scope>
</reference>
<keyword id="KW-0002">3D-structure</keyword>
<keyword id="KW-0025">Alternative splicing</keyword>
<keyword id="KW-0966">Cell projection</keyword>
<keyword id="KW-0963">Cytoplasm</keyword>
<keyword id="KW-0256">Endoplasmic reticulum</keyword>
<keyword id="KW-0967">Endosome</keyword>
<keyword id="KW-0333">Golgi apparatus</keyword>
<keyword id="KW-0343">GTPase activation</keyword>
<keyword id="KW-0472">Membrane</keyword>
<keyword id="KW-0488">Methylation</keyword>
<keyword id="KW-0597">Phosphoprotein</keyword>
<keyword id="KW-1267">Proteomics identification</keyword>
<keyword id="KW-1185">Reference proteome</keyword>
<keyword id="KW-0728">SH3 domain</keyword>
<keyword id="KW-0770">Synapse</keyword>
<protein>
    <recommendedName>
        <fullName>Rho GTPase-activating protein 32</fullName>
    </recommendedName>
    <alternativeName>
        <fullName>Brain-specific Rho GTPase-activating protein</fullName>
    </alternativeName>
    <alternativeName>
        <fullName>GAB-associated Cdc42/Rac GTPase-activating protein</fullName>
    </alternativeName>
    <alternativeName>
        <fullName>GC-GAP</fullName>
    </alternativeName>
    <alternativeName>
        <fullName>GTPase regulator interacting with TrkA</fullName>
    </alternativeName>
    <alternativeName>
        <fullName>Rho-type GTPase-activating protein 32</fullName>
    </alternativeName>
    <alternativeName>
        <fullName>Rho/Cdc42/Rac GTPase-activating protein RICS</fullName>
    </alternativeName>
    <alternativeName>
        <fullName>RhoGAP involved in the beta-catenin-N-cadherin and NMDA receptor signaling</fullName>
    </alternativeName>
    <alternativeName>
        <fullName>p200RhoGAP</fullName>
    </alternativeName>
    <alternativeName>
        <fullName>p250GAP</fullName>
    </alternativeName>
</protein>
<comment type="function">
    <text evidence="1 6 7 8 9 10 11 12">GTPase-activating protein (GAP) promoting GTP hydrolysis on RHOA, CDC42 and RAC1 small GTPases. May be involved in the differentiation of neuronal cells during the formation of neurite extensions. Involved in NMDA receptor activity-dependent actin reorganization in dendritic spines. May mediate cross-talks between Ras- and Rho-regulated signaling pathways in cell growth regulation. Isoform 2 has higher GAP activity (By similarity).</text>
</comment>
<comment type="subunit">
    <text evidence="2 6 8 9 10 11">Interacts with NTRK1 (via cytoplasmic domain); the interaction is independent of the phosphorylation state of NTRK1 (PubMed:12446789). Interacts with SHC3 (via SH2 domain) (PubMed:12446789). Interacts with RASA1 (via SH3 domain); the interaction is necessary for the Ras activation and cell transforming activities of ARHGAP32 (By similarity). Interacts with GAB1 and GAB2 (PubMed:12819203). Interacts with CRK and CRKL (PubMed:12446789, PubMed:12819203). Found in a complex with CRKL and BCAR1; upon EGF stimulation BCAR1 may be replaced by EGFR (PubMed:12446789, PubMed:12819203). Interacts with NCK1 (via SH3 domain); NCK1 recruits phosphorylated BCAR1 to the complex (PubMed:12819203). Isoform 2 interacts with FYN; the interaction appears to be dependent on tyrosine phosphorylation of ARHGAP32 (PubMed:12788081). Interacts with EGFR; the interaction requires EGF stimulation and is increased by SHC3 (PubMed:12446789). Interacts with CDC42; the interaction requires constitutively active CDC42. Interacts with CTNNB1 (PubMed:12531901). Interacts with GRIN2B (PubMed:12857875). Interacts with DLG4 and CDH2 (By similarity). Interacts with GPHN (By similarity).</text>
</comment>
<comment type="interaction">
    <interactant intactId="EBI-308663">
        <id>A7KAX9</id>
    </interactant>
    <interactant intactId="EBI-743598">
        <id>Q9NYB9</id>
        <label>ABI2</label>
    </interactant>
    <organismsDiffer>false</organismsDiffer>
    <experiments>4</experiments>
</comment>
<comment type="interaction">
    <interactant intactId="EBI-308663">
        <id>A7KAX9</id>
    </interactant>
    <interactant intactId="EBI-886">
        <id>P46108</id>
        <label>CRK</label>
    </interactant>
    <organismsDiffer>false</organismsDiffer>
    <experiments>3</experiments>
</comment>
<comment type="interaction">
    <interactant intactId="EBI-308663">
        <id>A7KAX9</id>
    </interactant>
    <interactant intactId="EBI-948630">
        <id>Q86Y13</id>
        <label>DZIP3</label>
    </interactant>
    <organismsDiffer>false</organismsDiffer>
    <experiments>3</experiments>
</comment>
<comment type="interaction">
    <interactant intactId="EBI-308663">
        <id>A7KAX9</id>
    </interactant>
    <interactant intactId="EBI-515315">
        <id>P06241</id>
        <label>FYN</label>
    </interactant>
    <organismsDiffer>false</organismsDiffer>
    <experiments>4</experiments>
</comment>
<comment type="interaction">
    <interactant intactId="EBI-308663">
        <id>A7KAX9</id>
    </interactant>
    <interactant intactId="EBI-12179869">
        <id>P50458</id>
        <label>LHX2</label>
    </interactant>
    <organismsDiffer>false</organismsDiffer>
    <experiments>3</experiments>
</comment>
<comment type="interaction">
    <interactant intactId="EBI-308663">
        <id>A7KAX9</id>
    </interactant>
    <interactant intactId="EBI-741037">
        <id>Q9BRK4</id>
        <label>LZTS2</label>
    </interactant>
    <organismsDiffer>false</organismsDiffer>
    <experiments>3</experiments>
</comment>
<comment type="interaction">
    <interactant intactId="EBI-308663">
        <id>A7KAX9</id>
    </interactant>
    <interactant intactId="EBI-724076">
        <id>Q99750</id>
        <label>MDFI</label>
    </interactant>
    <organismsDiffer>false</organismsDiffer>
    <experiments>3</experiments>
</comment>
<comment type="interaction">
    <interactant intactId="EBI-308663">
        <id>A7KAX9</id>
    </interactant>
    <interactant intactId="EBI-713635">
        <id>O43639</id>
        <label>NCK2</label>
    </interactant>
    <organismsDiffer>false</organismsDiffer>
    <experiments>3</experiments>
</comment>
<comment type="interaction">
    <interactant intactId="EBI-308663">
        <id>A7KAX9</id>
    </interactant>
    <interactant intactId="EBI-476295">
        <id>P31947</id>
        <label>SFN</label>
    </interactant>
    <organismsDiffer>false</organismsDiffer>
    <experiments>3</experiments>
</comment>
<comment type="interaction">
    <interactant intactId="EBI-308663">
        <id>A7KAX9</id>
    </interactant>
    <interactant intactId="EBI-717810">
        <id>Q08117</id>
        <label>TLE5</label>
    </interactant>
    <organismsDiffer>false</organismsDiffer>
    <experiments>3</experiments>
</comment>
<comment type="subcellular location">
    <subcellularLocation>
        <location evidence="2">Postsynaptic density</location>
    </subcellularLocation>
    <subcellularLocation>
        <location evidence="2">Cell projection</location>
        <location evidence="2">Dendritic spine</location>
    </subcellularLocation>
    <subcellularLocation>
        <location evidence="6">Cytoplasm</location>
        <location evidence="6">Cell cortex</location>
    </subcellularLocation>
    <subcellularLocation>
        <location evidence="12">Endosome membrane</location>
    </subcellularLocation>
    <subcellularLocation>
        <location evidence="12">Golgi apparatus membrane</location>
    </subcellularLocation>
    <subcellularLocation>
        <location evidence="2">Endoplasmic reticulum membrane</location>
    </subcellularLocation>
    <subcellularLocation>
        <location evidence="12">Membrane</location>
    </subcellularLocation>
    <text evidence="2 6 10 12">Association to membrane via PX domain (PubMed:17663722). Associated with cortical actin in undifferentiated neuroblastoma cells, but localized to dendritic spine and postsynaptic density after differentiation (By similarity). Colocalizes with EGFR at the cell membrane upon EGF treatment (PubMed:12446789). Colocalizes with GAB2 at the cell membrane (PubMed:12819203).</text>
</comment>
<comment type="alternative products">
    <event type="alternative splicing"/>
    <isoform>
        <id>A7KAX9-1</id>
        <name>1</name>
        <name>PX-RICS</name>
        <sequence type="displayed"/>
    </isoform>
    <isoform>
        <id>A7KAX9-2</id>
        <name>2</name>
        <sequence type="described" ref="VSP_034933"/>
    </isoform>
    <isoform>
        <id>A7KAX9-3</id>
        <name>3</name>
        <sequence type="described" ref="VSP_034934 VSP_034935 VSP_034936"/>
    </isoform>
</comment>
<comment type="tissue specificity">
    <text evidence="6">Isoform 1 and isoform 2 are highly expressed in brain and testis. Isoform 1 is also expressed in other tissues such as lung, liver and spleen.</text>
</comment>
<comment type="domain">
    <text evidence="1">The N-terminal PX domain interacts specifically with phosphatidylinositides.</text>
</comment>
<comment type="PTM">
    <text evidence="1">Isoform 2 is phosphorylated on multiple tyrosine residues by FYN. Phosphorylated tyrosine residues undergo dephosphorylation after stimulation of NMDA receptors (By similarity). Phosphorylated in vitro by CaMK2 in the presence of calmodulin and calcium; which inhibits GAP activity (By similarity).</text>
</comment>
<comment type="similarity">
    <text evidence="18">Belongs to the PX domain-containing GAP family.</text>
</comment>
<comment type="sequence caution" evidence="18">
    <conflict type="erroneous initiation">
        <sequence resource="EMBL-CDS" id="BAA34432"/>
    </conflict>
    <text>Extended N-terminus.</text>
</comment>
<gene>
    <name type="primary">ARHGAP32</name>
    <name type="synonym">GRIT</name>
    <name type="synonym">KIAA0712</name>
    <name type="synonym">RICS</name>
</gene>
<sequence>METESESSTLGDDSVFWLESEVIIQVTDCEEEEREEKFRKMKSSVHSEEDDFVPELHRNVHPRERPDWEETLSAMARGADVPEIPGDLTLKTCGSTASMKVKHVKKLPFTKGHFPKMAECAHFHYENVEFGSIQLSLSEEQNEVMKNGCESKELVYLVQIACQGKSWIVKRSYEDFRVLDKHLHLCIYDRRFSQLSELPRSDTLKDSPESVTQMLMAYLSRLSAIAGNKINCGPALTWMEIDNKGNHLLVHEESSINTPAVGAAHVIKRYTARAPDELTLEVGDIVSVIDMPPKVLSTWWRGKHGFQVGLFPGHCVELINQKVPQSVTNSVPKPVSKKHGKLITFLRTFMKSRPTKQKLKQRGILKERVFGCDLGEHLLNSGFEVPQVLQSCTAFIERYGIVDGIYRLSGVASNIQRLRHEFDSEHVPDLTKEPYVQDIHSVGSLCKLYFRELPNPLLTYQLYEKFSDAVSAATDEERLIKIHDVIQQLPPPHYRTLEFLMRHLSLLADYCSITNMHAKNLAIVWAPNLLRSKQIESACFSGTAAFMEVRIQSVVVEFILNHVDVLFSGRISMAMQEGAASLSRPKSLLVSSPSTKLLTLEEAQARTQAQVNSPIVTENKYIEVGEGPAALQGKFHTIIEFPLERKRPQNKMKKSPVGSWRSFFNLGKSSSVSKRKLQRNESEPSEMKAMALKGGRAEGTLRSAKSEESLTSLHAVDGDSKLFRPRRPRSSSDALSASFNGEMLGNRCNSYDNLPHDNESEEEGGLLHIPALMSPHSAEDVDLSPPDIGVASLDFDPMSFQCSPPKAESECLESGASFLDSPGYSKDKPSANKKDAETGSSQCQTPGSTASSEPVSPLQEKLSPFFTLDLSPTEDKSSKPSSFTEKVVYAFSPKIGRKLSKSPSMSISEPISVTLPPRVSEVIGTVSNTTAQNASSSTWDKCVEERDATNRSPTQIVKMKTNETVAQEAYESEVQPLDQVAAEEVELPGKEDQSVSSSQSKAVASGQTQTGAVTHDPPQDSVPVSSVSLIPPPPPPKNVARMLALALAESAQQASTQSLKRPGTSQAGYTNYGDIAVATTEDNLSSSYSAVALDKAYFQTDRPAEQFHLQNNAPGNCDHPLPETTATGDPTHSNTTESGEQHHQVDLTGNQPHQAYLSGDPEKARITSVPLDSEKSDDHVSFPEDQSGKNSMPTVSFLDQDQSPPRFYSGDQPPSYLGASVDKLHHPLEFADKSPTPPNLPSDKIYPPSGSPEENTSTATMTYMTTTPATAQMSTKEASWDVAEQPTTADFAAATLQRTHRTNRPLPPPPSQRSAEQPPVVGQVQAATNIGLNNSHKVQGVVPVPERPPEPRAMDDPASAFISDSGAAAAQCPMATAVQPGLPEKVRDGARVPLLHLRAESVPAHPCGFPAPLPPTRMMESKMIAAIHSSSADATSSSNYHSFVTASSTSVDDALPLPLPVPQPKHASQKTVYSSFARPDVTTEPFGPDNCLHFNMTPNCQYRPQSVPPHHNKLEQHQVYGARSEPPASMGLRYNTYVAPGRNASGHHSKPCSRVEYVSSLSSSVRNTCYPEDIPPYPTIRRVQSLHAPPSSMIRSVPISRTEVPPDDEPAYCPRPLYQYKPYQSSQARSDYHVTQLQPYFENGRVHYRYSPYSSSSSSYYSPDGALCDVDAYGTVQLRPLHRLPNRDFAFYNPRLQGKSLYSYAGLAPRPRANVTGYFSPNDHNVVSMPPAADVKHTYTSWDLEDMEKYRMQSIRRESRARQKVKGPVMSQYDNMTPAVQDDLGGIYVIHLRSKSDPGKTGLLSVAEGKESRHAAKAISPEGEDRFYRRHPEAEMDRAHHHGGHGSTQPEKPSLPQKQSSLRSRKLPDMGCSLPEHRAHQEASHRQFCESKNGPPYPQGAGQLDYGSKGIPDTSEPVSYHNSGVKYAASGQESLRLNHKEVRLSKEMERPWVRQPSAPEKHSRDCYKEEEHLTQSIVPPPKPERSHSLKLHHTQNVERDPSVLYQYQPHGKRQSSVTVVSQYDNLEDYHSLPQHQRGVFGGGGMGTYVPPGFPHPQSRTYATALGQGAFLPAELSLQHPETQIHAE</sequence>
<proteinExistence type="evidence at protein level"/>